<name>ETFA_YEAST</name>
<sequence length="344" mass="36803">MFKSLAAVLPRASKAKFLQKNYASTLAFIESSKDGSVSRSSLSLLAAAQKLSNPITAVITGSKAEKTAEALKSSYSCSNLEKLVIFEDSKLDTCLPEQLTPLLVKLLKGGDYSHFVVSNSSVGKSVLPRVGALLDVQPVCEVTVIKDPKTFIRPIYAGNIISTIECQAEKKLLIIRASAFPPIAEGSMDSVTIEKRTDIPPCDLNVTWVKTILTKSERPELTSAQNVVTGGRALKDKETFEKLLSPLADVLHAAIGATRASVDNGLCDNSLQIGQTGKVVAPNLYIAIGVSGAVQHLAGMKDSKVIVAINNDPDAPIFNVADYGLQGDLYKIVPELTEKLGKYK</sequence>
<comment type="function">
    <text evidence="1">The electron transfer flavoprotein serves as a specific electron acceptor for several dehydrogenases, including five acyl-CoA dehydrogenases, glutaryl-CoA and sarcosine dehydrogenase. It transfers the electrons to the main mitochondrial respiratory chain via ETF-ubiquinone oxidoreductase (ETF dehydrogenase) (By similarity).</text>
</comment>
<comment type="cofactor">
    <cofactor evidence="1">
        <name>FAD</name>
        <dbReference type="ChEBI" id="CHEBI:57692"/>
    </cofactor>
    <text evidence="1">Binds 1 FAD per dimer.</text>
</comment>
<comment type="subunit">
    <text evidence="1">Heterodimer of an alpha and a beta subunit.</text>
</comment>
<comment type="subcellular location">
    <subcellularLocation>
        <location evidence="1">Mitochondrion matrix</location>
    </subcellularLocation>
</comment>
<comment type="miscellaneous">
    <text evidence="3">Present with 2950 molecules/cell in log phase SD medium.</text>
</comment>
<comment type="similarity">
    <text evidence="4">Belongs to the ETF alpha-subunit/FixB family.</text>
</comment>
<evidence type="ECO:0000250" key="1"/>
<evidence type="ECO:0000255" key="2"/>
<evidence type="ECO:0000269" key="3">
    <source>
    </source>
</evidence>
<evidence type="ECO:0000305" key="4"/>
<feature type="transit peptide" description="Mitochondrion" evidence="2">
    <location>
        <begin position="1"/>
        <end status="unknown"/>
    </location>
</feature>
<feature type="chain" id="PRO_0000008660" description="Probable electron transfer flavoprotein subunit alpha, mitochondrial">
    <location>
        <begin status="unknown"/>
        <end position="344"/>
    </location>
</feature>
<feature type="binding site" evidence="2">
    <location>
        <begin position="284"/>
        <end position="312"/>
    </location>
    <ligand>
        <name>FAD</name>
        <dbReference type="ChEBI" id="CHEBI:57692"/>
    </ligand>
</feature>
<reference key="1">
    <citation type="journal article" date="1997" name="Nature">
        <title>The nucleotide sequence of Saccharomyces cerevisiae chromosome XVI.</title>
        <authorList>
            <person name="Bussey H."/>
            <person name="Storms R.K."/>
            <person name="Ahmed A."/>
            <person name="Albermann K."/>
            <person name="Allen E."/>
            <person name="Ansorge W."/>
            <person name="Araujo R."/>
            <person name="Aparicio A."/>
            <person name="Barrell B.G."/>
            <person name="Badcock K."/>
            <person name="Benes V."/>
            <person name="Botstein D."/>
            <person name="Bowman S."/>
            <person name="Brueckner M."/>
            <person name="Carpenter J."/>
            <person name="Cherry J.M."/>
            <person name="Chung E."/>
            <person name="Churcher C.M."/>
            <person name="Coster F."/>
            <person name="Davis K."/>
            <person name="Davis R.W."/>
            <person name="Dietrich F.S."/>
            <person name="Delius H."/>
            <person name="DiPaolo T."/>
            <person name="Dubois E."/>
            <person name="Duesterhoeft A."/>
            <person name="Duncan M."/>
            <person name="Floeth M."/>
            <person name="Fortin N."/>
            <person name="Friesen J.D."/>
            <person name="Fritz C."/>
            <person name="Goffeau A."/>
            <person name="Hall J."/>
            <person name="Hebling U."/>
            <person name="Heumann K."/>
            <person name="Hilbert H."/>
            <person name="Hillier L.W."/>
            <person name="Hunicke-Smith S."/>
            <person name="Hyman R.W."/>
            <person name="Johnston M."/>
            <person name="Kalman S."/>
            <person name="Kleine K."/>
            <person name="Komp C."/>
            <person name="Kurdi O."/>
            <person name="Lashkari D."/>
            <person name="Lew H."/>
            <person name="Lin A."/>
            <person name="Lin D."/>
            <person name="Louis E.J."/>
            <person name="Marathe R."/>
            <person name="Messenguy F."/>
            <person name="Mewes H.-W."/>
            <person name="Mirtipati S."/>
            <person name="Moestl D."/>
            <person name="Mueller-Auer S."/>
            <person name="Namath A."/>
            <person name="Nentwich U."/>
            <person name="Oefner P."/>
            <person name="Pearson D."/>
            <person name="Petel F.X."/>
            <person name="Pohl T.M."/>
            <person name="Purnelle B."/>
            <person name="Rajandream M.A."/>
            <person name="Rechmann S."/>
            <person name="Rieger M."/>
            <person name="Riles L."/>
            <person name="Roberts D."/>
            <person name="Schaefer M."/>
            <person name="Scharfe M."/>
            <person name="Scherens B."/>
            <person name="Schramm S."/>
            <person name="Schroeder M."/>
            <person name="Sdicu A.-M."/>
            <person name="Tettelin H."/>
            <person name="Urrestarazu L.A."/>
            <person name="Ushinsky S."/>
            <person name="Vierendeels F."/>
            <person name="Vissers S."/>
            <person name="Voss H."/>
            <person name="Walsh S.V."/>
            <person name="Wambutt R."/>
            <person name="Wang Y."/>
            <person name="Wedler E."/>
            <person name="Wedler H."/>
            <person name="Winnett E."/>
            <person name="Zhong W.-W."/>
            <person name="Zollner A."/>
            <person name="Vo D.H."/>
            <person name="Hani J."/>
        </authorList>
    </citation>
    <scope>NUCLEOTIDE SEQUENCE [LARGE SCALE GENOMIC DNA]</scope>
    <source>
        <strain>ATCC 204508 / S288c</strain>
    </source>
</reference>
<reference key="2">
    <citation type="journal article" date="2014" name="G3 (Bethesda)">
        <title>The reference genome sequence of Saccharomyces cerevisiae: Then and now.</title>
        <authorList>
            <person name="Engel S.R."/>
            <person name="Dietrich F.S."/>
            <person name="Fisk D.G."/>
            <person name="Binkley G."/>
            <person name="Balakrishnan R."/>
            <person name="Costanzo M.C."/>
            <person name="Dwight S.S."/>
            <person name="Hitz B.C."/>
            <person name="Karra K."/>
            <person name="Nash R.S."/>
            <person name="Weng S."/>
            <person name="Wong E.D."/>
            <person name="Lloyd P."/>
            <person name="Skrzypek M.S."/>
            <person name="Miyasato S.R."/>
            <person name="Simison M."/>
            <person name="Cherry J.M."/>
        </authorList>
    </citation>
    <scope>GENOME REANNOTATION</scope>
    <source>
        <strain>ATCC 204508 / S288c</strain>
    </source>
</reference>
<reference key="3">
    <citation type="journal article" date="2007" name="Genome Res.">
        <title>Approaching a complete repository of sequence-verified protein-encoding clones for Saccharomyces cerevisiae.</title>
        <authorList>
            <person name="Hu Y."/>
            <person name="Rolfs A."/>
            <person name="Bhullar B."/>
            <person name="Murthy T.V.S."/>
            <person name="Zhu C."/>
            <person name="Berger M.F."/>
            <person name="Camargo A.A."/>
            <person name="Kelley F."/>
            <person name="McCarron S."/>
            <person name="Jepson D."/>
            <person name="Richardson A."/>
            <person name="Raphael J."/>
            <person name="Moreira D."/>
            <person name="Taycher E."/>
            <person name="Zuo D."/>
            <person name="Mohr S."/>
            <person name="Kane M.F."/>
            <person name="Williamson J."/>
            <person name="Simpson A.J.G."/>
            <person name="Bulyk M.L."/>
            <person name="Harlow E."/>
            <person name="Marsischky G."/>
            <person name="Kolodner R.D."/>
            <person name="LaBaer J."/>
        </authorList>
    </citation>
    <scope>NUCLEOTIDE SEQUENCE [GENOMIC DNA]</scope>
    <source>
        <strain>ATCC 204508 / S288c</strain>
    </source>
</reference>
<reference key="4">
    <citation type="journal article" date="2003" name="Nature">
        <title>Global analysis of protein expression in yeast.</title>
        <authorList>
            <person name="Ghaemmaghami S."/>
            <person name="Huh W.-K."/>
            <person name="Bower K."/>
            <person name="Howson R.W."/>
            <person name="Belle A."/>
            <person name="Dephoure N."/>
            <person name="O'Shea E.K."/>
            <person name="Weissman J.S."/>
        </authorList>
    </citation>
    <scope>LEVEL OF PROTEIN EXPRESSION [LARGE SCALE ANALYSIS]</scope>
</reference>
<dbReference type="EMBL" id="Z71255">
    <property type="protein sequence ID" value="CAA95044.1"/>
    <property type="molecule type" value="Genomic_DNA"/>
</dbReference>
<dbReference type="EMBL" id="Z48951">
    <property type="protein sequence ID" value="CAA88782.1"/>
    <property type="molecule type" value="Genomic_DNA"/>
</dbReference>
<dbReference type="EMBL" id="U31900">
    <property type="protein sequence ID" value="AAA97583.1"/>
    <property type="molecule type" value="Genomic_DNA"/>
</dbReference>
<dbReference type="EMBL" id="AY692635">
    <property type="protein sequence ID" value="AAT92654.1"/>
    <property type="molecule type" value="Genomic_DNA"/>
</dbReference>
<dbReference type="EMBL" id="BK006949">
    <property type="protein sequence ID" value="DAA11431.1"/>
    <property type="molecule type" value="Genomic_DNA"/>
</dbReference>
<dbReference type="PIR" id="S52817">
    <property type="entry name" value="S52817"/>
</dbReference>
<dbReference type="RefSeq" id="NP_015329.1">
    <property type="nucleotide sequence ID" value="NM_001184101.1"/>
</dbReference>
<dbReference type="SMR" id="Q12480"/>
<dbReference type="BioGRID" id="36181">
    <property type="interactions" value="88"/>
</dbReference>
<dbReference type="DIP" id="DIP-5574N"/>
<dbReference type="FunCoup" id="Q12480">
    <property type="interactions" value="619"/>
</dbReference>
<dbReference type="IntAct" id="Q12480">
    <property type="interactions" value="17"/>
</dbReference>
<dbReference type="STRING" id="4932.YPR004C"/>
<dbReference type="iPTMnet" id="Q12480"/>
<dbReference type="PaxDb" id="4932-YPR004C"/>
<dbReference type="PeptideAtlas" id="Q12480"/>
<dbReference type="EnsemblFungi" id="YPR004C_mRNA">
    <property type="protein sequence ID" value="YPR004C"/>
    <property type="gene ID" value="YPR004C"/>
</dbReference>
<dbReference type="GeneID" id="856112"/>
<dbReference type="KEGG" id="sce:YPR004C"/>
<dbReference type="AGR" id="SGD:S000006208"/>
<dbReference type="SGD" id="S000006208">
    <property type="gene designation" value="AIM45"/>
</dbReference>
<dbReference type="VEuPathDB" id="FungiDB:YPR004C"/>
<dbReference type="eggNOG" id="KOG3954">
    <property type="taxonomic scope" value="Eukaryota"/>
</dbReference>
<dbReference type="GeneTree" id="ENSGT00390000013422"/>
<dbReference type="HOGENOM" id="CLU_034178_0_1_1"/>
<dbReference type="InParanoid" id="Q12480"/>
<dbReference type="OMA" id="WRPYAEQ"/>
<dbReference type="OrthoDB" id="1715808at2759"/>
<dbReference type="BioCyc" id="YEAST:G3O-34166-MONOMER"/>
<dbReference type="Reactome" id="R-SCE-611105">
    <property type="pathway name" value="Respiratory electron transport"/>
</dbReference>
<dbReference type="BioGRID-ORCS" id="856112">
    <property type="hits" value="0 hits in 10 CRISPR screens"/>
</dbReference>
<dbReference type="PRO" id="PR:Q12480"/>
<dbReference type="Proteomes" id="UP000002311">
    <property type="component" value="Chromosome XVI"/>
</dbReference>
<dbReference type="RNAct" id="Q12480">
    <property type="molecule type" value="protein"/>
</dbReference>
<dbReference type="GO" id="GO:0005759">
    <property type="term" value="C:mitochondrial matrix"/>
    <property type="evidence" value="ECO:0007669"/>
    <property type="project" value="UniProtKB-SubCell"/>
</dbReference>
<dbReference type="GO" id="GO:0005739">
    <property type="term" value="C:mitochondrion"/>
    <property type="evidence" value="ECO:0000314"/>
    <property type="project" value="SGD"/>
</dbReference>
<dbReference type="GO" id="GO:0009055">
    <property type="term" value="F:electron transfer activity"/>
    <property type="evidence" value="ECO:0000318"/>
    <property type="project" value="GO_Central"/>
</dbReference>
<dbReference type="GO" id="GO:0050660">
    <property type="term" value="F:flavin adenine dinucleotide binding"/>
    <property type="evidence" value="ECO:0000318"/>
    <property type="project" value="GO_Central"/>
</dbReference>
<dbReference type="GO" id="GO:0033539">
    <property type="term" value="P:fatty acid beta-oxidation using acyl-CoA dehydrogenase"/>
    <property type="evidence" value="ECO:0000318"/>
    <property type="project" value="GO_Central"/>
</dbReference>
<dbReference type="CDD" id="cd01715">
    <property type="entry name" value="ETF_alpha"/>
    <property type="match status" value="1"/>
</dbReference>
<dbReference type="FunFam" id="3.40.50.620:FF:000041">
    <property type="entry name" value="Electron transfer flavoprotein alpha subunit"/>
    <property type="match status" value="1"/>
</dbReference>
<dbReference type="FunFam" id="3.40.50.1220:FF:000001">
    <property type="entry name" value="Electron transfer flavoprotein, alpha subunit"/>
    <property type="match status" value="1"/>
</dbReference>
<dbReference type="Gene3D" id="3.40.50.620">
    <property type="entry name" value="HUPs"/>
    <property type="match status" value="1"/>
</dbReference>
<dbReference type="Gene3D" id="3.40.50.1220">
    <property type="entry name" value="TPP-binding domain"/>
    <property type="match status" value="1"/>
</dbReference>
<dbReference type="InterPro" id="IPR029035">
    <property type="entry name" value="DHS-like_NAD/FAD-binding_dom"/>
</dbReference>
<dbReference type="InterPro" id="IPR014730">
    <property type="entry name" value="ETF_a/b_N"/>
</dbReference>
<dbReference type="InterPro" id="IPR001308">
    <property type="entry name" value="ETF_a/FixB"/>
</dbReference>
<dbReference type="InterPro" id="IPR033947">
    <property type="entry name" value="ETF_alpha_N"/>
</dbReference>
<dbReference type="InterPro" id="IPR014731">
    <property type="entry name" value="ETF_asu_C"/>
</dbReference>
<dbReference type="InterPro" id="IPR018206">
    <property type="entry name" value="ETF_asu_C_CS"/>
</dbReference>
<dbReference type="InterPro" id="IPR014729">
    <property type="entry name" value="Rossmann-like_a/b/a_fold"/>
</dbReference>
<dbReference type="PANTHER" id="PTHR43153">
    <property type="entry name" value="ELECTRON TRANSFER FLAVOPROTEIN ALPHA"/>
    <property type="match status" value="1"/>
</dbReference>
<dbReference type="PANTHER" id="PTHR43153:SF1">
    <property type="entry name" value="ELECTRON TRANSFER FLAVOPROTEIN SUBUNIT ALPHA, MITOCHONDRIAL"/>
    <property type="match status" value="1"/>
</dbReference>
<dbReference type="Pfam" id="PF01012">
    <property type="entry name" value="ETF"/>
    <property type="match status" value="1"/>
</dbReference>
<dbReference type="Pfam" id="PF00766">
    <property type="entry name" value="ETF_alpha"/>
    <property type="match status" value="1"/>
</dbReference>
<dbReference type="PIRSF" id="PIRSF000089">
    <property type="entry name" value="Electra_flavoP_a"/>
    <property type="match status" value="1"/>
</dbReference>
<dbReference type="SMART" id="SM00893">
    <property type="entry name" value="ETF"/>
    <property type="match status" value="1"/>
</dbReference>
<dbReference type="SUPFAM" id="SSF52402">
    <property type="entry name" value="Adenine nucleotide alpha hydrolases-like"/>
    <property type="match status" value="1"/>
</dbReference>
<dbReference type="SUPFAM" id="SSF52467">
    <property type="entry name" value="DHS-like NAD/FAD-binding domain"/>
    <property type="match status" value="1"/>
</dbReference>
<dbReference type="PROSITE" id="PS00696">
    <property type="entry name" value="ETF_ALPHA"/>
    <property type="match status" value="1"/>
</dbReference>
<proteinExistence type="evidence at protein level"/>
<keyword id="KW-0249">Electron transport</keyword>
<keyword id="KW-0274">FAD</keyword>
<keyword id="KW-0285">Flavoprotein</keyword>
<keyword id="KW-0496">Mitochondrion</keyword>
<keyword id="KW-1185">Reference proteome</keyword>
<keyword id="KW-0809">Transit peptide</keyword>
<keyword id="KW-0813">Transport</keyword>
<gene>
    <name type="primary">AIM45</name>
    <name type="ordered locus">YPR004C</name>
    <name type="ORF">LPZ4C</name>
    <name type="ORF">YP9723.04C</name>
</gene>
<organism>
    <name type="scientific">Saccharomyces cerevisiae (strain ATCC 204508 / S288c)</name>
    <name type="common">Baker's yeast</name>
    <dbReference type="NCBI Taxonomy" id="559292"/>
    <lineage>
        <taxon>Eukaryota</taxon>
        <taxon>Fungi</taxon>
        <taxon>Dikarya</taxon>
        <taxon>Ascomycota</taxon>
        <taxon>Saccharomycotina</taxon>
        <taxon>Saccharomycetes</taxon>
        <taxon>Saccharomycetales</taxon>
        <taxon>Saccharomycetaceae</taxon>
        <taxon>Saccharomyces</taxon>
    </lineage>
</organism>
<accession>Q12480</accession>
<accession>D6W415</accession>
<protein>
    <recommendedName>
        <fullName>Probable electron transfer flavoprotein subunit alpha, mitochondrial</fullName>
        <shortName>Alpha-ETF</shortName>
    </recommendedName>
    <alternativeName>
        <fullName>Altered inheritance rate of mitochondria protein 45</fullName>
    </alternativeName>
</protein>